<protein>
    <recommendedName>
        <fullName evidence="3">Small ribosomal subunit protein uS7</fullName>
    </recommendedName>
    <alternativeName>
        <fullName>30S ribosomal protein S7</fullName>
    </alternativeName>
</protein>
<accession>O93639</accession>
<keyword id="KW-0687">Ribonucleoprotein</keyword>
<keyword id="KW-0689">Ribosomal protein</keyword>
<keyword id="KW-0694">RNA-binding</keyword>
<keyword id="KW-0699">rRNA-binding</keyword>
<reference key="1">
    <citation type="journal article" date="1998" name="FEBS Lett.">
        <title>Archaeal cold-adapted proteins: structural and evolutionary analysis of the elongation factor 2 proteins from psychrophilic, mesophilic and thermophilic methanogens.</title>
        <authorList>
            <person name="Thomas T."/>
            <person name="Cavicchioli R."/>
        </authorList>
    </citation>
    <scope>NUCLEOTIDE SEQUENCE [GENOMIC DNA]</scope>
    <source>
        <strain>ATCC 43570 / DSM 1825 / OCM 12 / TM-1</strain>
    </source>
</reference>
<sequence length="29" mass="3217">ELIGAANRDTKSFSINRKDAKERVAKAAR</sequence>
<evidence type="ECO:0000250" key="1"/>
<evidence type="ECO:0000256" key="2">
    <source>
        <dbReference type="SAM" id="MobiDB-lite"/>
    </source>
</evidence>
<evidence type="ECO:0000305" key="3"/>
<proteinExistence type="inferred from homology"/>
<gene>
    <name type="primary">rps7</name>
    <name type="synonym">s7</name>
</gene>
<feature type="chain" id="PRO_0000124404" description="Small ribosomal subunit protein uS7">
    <location>
        <begin position="1" status="less than"/>
        <end position="29"/>
    </location>
</feature>
<feature type="region of interest" description="Disordered" evidence="2">
    <location>
        <begin position="1"/>
        <end position="29"/>
    </location>
</feature>
<feature type="compositionally biased region" description="Basic and acidic residues" evidence="2">
    <location>
        <begin position="8"/>
        <end position="29"/>
    </location>
</feature>
<feature type="non-terminal residue">
    <location>
        <position position="1"/>
    </location>
</feature>
<name>RS7_METTE</name>
<dbReference type="EMBL" id="AF026165">
    <property type="protein sequence ID" value="AAC79199.1"/>
    <property type="molecule type" value="Genomic_DNA"/>
</dbReference>
<dbReference type="PIR" id="T44245">
    <property type="entry name" value="T44245"/>
</dbReference>
<dbReference type="SMR" id="O93639"/>
<dbReference type="GO" id="GO:1990904">
    <property type="term" value="C:ribonucleoprotein complex"/>
    <property type="evidence" value="ECO:0007669"/>
    <property type="project" value="UniProtKB-KW"/>
</dbReference>
<dbReference type="GO" id="GO:0005840">
    <property type="term" value="C:ribosome"/>
    <property type="evidence" value="ECO:0007669"/>
    <property type="project" value="UniProtKB-KW"/>
</dbReference>
<dbReference type="GO" id="GO:0019843">
    <property type="term" value="F:rRNA binding"/>
    <property type="evidence" value="ECO:0007669"/>
    <property type="project" value="UniProtKB-KW"/>
</dbReference>
<dbReference type="InterPro" id="IPR036823">
    <property type="entry name" value="Ribosomal_uS7_dom_sf"/>
</dbReference>
<dbReference type="SUPFAM" id="SSF47973">
    <property type="entry name" value="Ribosomal protein S7"/>
    <property type="match status" value="1"/>
</dbReference>
<comment type="function">
    <text evidence="1">One of the primary rRNA binding proteins, it binds directly to 16S rRNA where it nucleates assembly of the head domain of the 30S subunit. Is located at the subunit interface close to the decoding center (By similarity).</text>
</comment>
<comment type="subunit">
    <text>Part of the 30S ribosomal subunit.</text>
</comment>
<comment type="similarity">
    <text evidence="3">Belongs to the universal ribosomal protein uS7 family.</text>
</comment>
<organism>
    <name type="scientific">Methanosarcina thermophila</name>
    <dbReference type="NCBI Taxonomy" id="2210"/>
    <lineage>
        <taxon>Archaea</taxon>
        <taxon>Methanobacteriati</taxon>
        <taxon>Methanobacteriota</taxon>
        <taxon>Stenosarchaea group</taxon>
        <taxon>Methanomicrobia</taxon>
        <taxon>Methanosarcinales</taxon>
        <taxon>Methanosarcinaceae</taxon>
        <taxon>Methanosarcina</taxon>
    </lineage>
</organism>